<name>PDXS_METVS</name>
<dbReference type="EC" id="4.3.3.6" evidence="1"/>
<dbReference type="EMBL" id="CP000742">
    <property type="protein sequence ID" value="ABR55013.1"/>
    <property type="molecule type" value="Genomic_DNA"/>
</dbReference>
<dbReference type="RefSeq" id="WP_012065928.1">
    <property type="nucleotide sequence ID" value="NC_009634.1"/>
</dbReference>
<dbReference type="SMR" id="A6UR91"/>
<dbReference type="STRING" id="406327.Mevan_1113"/>
<dbReference type="GeneID" id="5325032"/>
<dbReference type="KEGG" id="mvn:Mevan_1113"/>
<dbReference type="eggNOG" id="arCOG04075">
    <property type="taxonomic scope" value="Archaea"/>
</dbReference>
<dbReference type="HOGENOM" id="CLU_055352_1_0_2"/>
<dbReference type="OrthoDB" id="6840at2157"/>
<dbReference type="UniPathway" id="UPA00245"/>
<dbReference type="Proteomes" id="UP000001107">
    <property type="component" value="Chromosome"/>
</dbReference>
<dbReference type="GO" id="GO:0036381">
    <property type="term" value="F:pyridoxal 5'-phosphate synthase (glutamine hydrolysing) activity"/>
    <property type="evidence" value="ECO:0007669"/>
    <property type="project" value="UniProtKB-UniRule"/>
</dbReference>
<dbReference type="GO" id="GO:0006520">
    <property type="term" value="P:amino acid metabolic process"/>
    <property type="evidence" value="ECO:0007669"/>
    <property type="project" value="TreeGrafter"/>
</dbReference>
<dbReference type="GO" id="GO:0042823">
    <property type="term" value="P:pyridoxal phosphate biosynthetic process"/>
    <property type="evidence" value="ECO:0007669"/>
    <property type="project" value="UniProtKB-UniRule"/>
</dbReference>
<dbReference type="GO" id="GO:0008615">
    <property type="term" value="P:pyridoxine biosynthetic process"/>
    <property type="evidence" value="ECO:0007669"/>
    <property type="project" value="TreeGrafter"/>
</dbReference>
<dbReference type="CDD" id="cd04727">
    <property type="entry name" value="pdxS"/>
    <property type="match status" value="1"/>
</dbReference>
<dbReference type="FunFam" id="3.20.20.70:FF:000001">
    <property type="entry name" value="Pyridoxine biosynthesis protein PDX1"/>
    <property type="match status" value="1"/>
</dbReference>
<dbReference type="Gene3D" id="3.20.20.70">
    <property type="entry name" value="Aldolase class I"/>
    <property type="match status" value="1"/>
</dbReference>
<dbReference type="HAMAP" id="MF_01824">
    <property type="entry name" value="PdxS"/>
    <property type="match status" value="1"/>
</dbReference>
<dbReference type="InterPro" id="IPR013785">
    <property type="entry name" value="Aldolase_TIM"/>
</dbReference>
<dbReference type="InterPro" id="IPR001852">
    <property type="entry name" value="PdxS/SNZ"/>
</dbReference>
<dbReference type="InterPro" id="IPR033755">
    <property type="entry name" value="PdxS/SNZ_N"/>
</dbReference>
<dbReference type="InterPro" id="IPR011060">
    <property type="entry name" value="RibuloseP-bd_barrel"/>
</dbReference>
<dbReference type="NCBIfam" id="NF003215">
    <property type="entry name" value="PRK04180.1"/>
    <property type="match status" value="1"/>
</dbReference>
<dbReference type="NCBIfam" id="TIGR00343">
    <property type="entry name" value="pyridoxal 5'-phosphate synthase lyase subunit PdxS"/>
    <property type="match status" value="1"/>
</dbReference>
<dbReference type="PANTHER" id="PTHR31829">
    <property type="entry name" value="PYRIDOXAL 5'-PHOSPHATE SYNTHASE SUBUNIT SNZ1-RELATED"/>
    <property type="match status" value="1"/>
</dbReference>
<dbReference type="PANTHER" id="PTHR31829:SF0">
    <property type="entry name" value="PYRIDOXAL 5'-PHOSPHATE SYNTHASE SUBUNIT SNZ1-RELATED"/>
    <property type="match status" value="1"/>
</dbReference>
<dbReference type="Pfam" id="PF01680">
    <property type="entry name" value="SOR_SNZ"/>
    <property type="match status" value="1"/>
</dbReference>
<dbReference type="PIRSF" id="PIRSF029271">
    <property type="entry name" value="Pdx1"/>
    <property type="match status" value="1"/>
</dbReference>
<dbReference type="SUPFAM" id="SSF51366">
    <property type="entry name" value="Ribulose-phoshate binding barrel"/>
    <property type="match status" value="1"/>
</dbReference>
<dbReference type="PROSITE" id="PS01235">
    <property type="entry name" value="PDXS_SNZ_1"/>
    <property type="match status" value="1"/>
</dbReference>
<dbReference type="PROSITE" id="PS51129">
    <property type="entry name" value="PDXS_SNZ_2"/>
    <property type="match status" value="1"/>
</dbReference>
<proteinExistence type="inferred from homology"/>
<accession>A6UR91</accession>
<evidence type="ECO:0000255" key="1">
    <source>
        <dbReference type="HAMAP-Rule" id="MF_01824"/>
    </source>
</evidence>
<gene>
    <name evidence="1" type="primary">pdxS</name>
    <name type="ordered locus">Mevan_1113</name>
</gene>
<sequence length="299" mass="32053">MKKLGTDLLKRGFAKMVKHGVVMDVTNVEQAKIAEEAGAAAVMALERVPADIRVQGGVARMSDPDMILEIKDAVSIPVMAKARIGHFVEAQVLESIGVDMIDESEVLTPADEINHINKKAFTAPFVCGARNLGEALRRIDEGAAMIRTKGEAGTGNVVEAVKHMRAVNEGIARVVGYHEMGLEAELVQMARNELKVPMEIILEVAKLKRLPVVNFAAGGIATPADAALMMQMGCDGVFVGSGIFKSGNPEIRAKAIVEATYNFDKPELIGEVSKNLGEAMVGINIDQIPEEMLLAKRGI</sequence>
<keyword id="KW-0456">Lyase</keyword>
<keyword id="KW-0663">Pyridoxal phosphate</keyword>
<keyword id="KW-0704">Schiff base</keyword>
<feature type="chain" id="PRO_1000070387" description="Pyridoxal 5'-phosphate synthase subunit PdxS">
    <location>
        <begin position="1"/>
        <end position="299"/>
    </location>
</feature>
<feature type="active site" description="Schiff-base intermediate with D-ribose 5-phosphate" evidence="1">
    <location>
        <position position="81"/>
    </location>
</feature>
<feature type="binding site" evidence="1">
    <location>
        <position position="24"/>
    </location>
    <ligand>
        <name>D-ribose 5-phosphate</name>
        <dbReference type="ChEBI" id="CHEBI:78346"/>
    </ligand>
</feature>
<feature type="binding site" evidence="1">
    <location>
        <position position="153"/>
    </location>
    <ligand>
        <name>D-ribose 5-phosphate</name>
        <dbReference type="ChEBI" id="CHEBI:78346"/>
    </ligand>
</feature>
<feature type="binding site" evidence="1">
    <location>
        <position position="165"/>
    </location>
    <ligand>
        <name>D-glyceraldehyde 3-phosphate</name>
        <dbReference type="ChEBI" id="CHEBI:59776"/>
    </ligand>
</feature>
<feature type="binding site" evidence="1">
    <location>
        <position position="219"/>
    </location>
    <ligand>
        <name>D-ribose 5-phosphate</name>
        <dbReference type="ChEBI" id="CHEBI:78346"/>
    </ligand>
</feature>
<feature type="binding site" evidence="1">
    <location>
        <begin position="240"/>
        <end position="241"/>
    </location>
    <ligand>
        <name>D-ribose 5-phosphate</name>
        <dbReference type="ChEBI" id="CHEBI:78346"/>
    </ligand>
</feature>
<protein>
    <recommendedName>
        <fullName evidence="1">Pyridoxal 5'-phosphate synthase subunit PdxS</fullName>
        <shortName evidence="1">PLP synthase subunit PdxS</shortName>
        <ecNumber evidence="1">4.3.3.6</ecNumber>
    </recommendedName>
    <alternativeName>
        <fullName evidence="1">Pdx1</fullName>
    </alternativeName>
</protein>
<organism>
    <name type="scientific">Methanococcus vannielii (strain ATCC 35089 / DSM 1224 / JCM 13029 / OCM 148 / SB)</name>
    <dbReference type="NCBI Taxonomy" id="406327"/>
    <lineage>
        <taxon>Archaea</taxon>
        <taxon>Methanobacteriati</taxon>
        <taxon>Methanobacteriota</taxon>
        <taxon>Methanomada group</taxon>
        <taxon>Methanococci</taxon>
        <taxon>Methanococcales</taxon>
        <taxon>Methanococcaceae</taxon>
        <taxon>Methanococcus</taxon>
    </lineage>
</organism>
<comment type="function">
    <text evidence="1">Catalyzes the formation of pyridoxal 5'-phosphate from ribose 5-phosphate (RBP), glyceraldehyde 3-phosphate (G3P) and ammonia. The ammonia is provided by the PdxT subunit. Can also use ribulose 5-phosphate and dihydroxyacetone phosphate as substrates, resulting from enzyme-catalyzed isomerization of RBP and G3P, respectively.</text>
</comment>
<comment type="catalytic activity">
    <reaction evidence="1">
        <text>aldehydo-D-ribose 5-phosphate + D-glyceraldehyde 3-phosphate + L-glutamine = pyridoxal 5'-phosphate + L-glutamate + phosphate + 3 H2O + H(+)</text>
        <dbReference type="Rhea" id="RHEA:31507"/>
        <dbReference type="ChEBI" id="CHEBI:15377"/>
        <dbReference type="ChEBI" id="CHEBI:15378"/>
        <dbReference type="ChEBI" id="CHEBI:29985"/>
        <dbReference type="ChEBI" id="CHEBI:43474"/>
        <dbReference type="ChEBI" id="CHEBI:58273"/>
        <dbReference type="ChEBI" id="CHEBI:58359"/>
        <dbReference type="ChEBI" id="CHEBI:59776"/>
        <dbReference type="ChEBI" id="CHEBI:597326"/>
        <dbReference type="EC" id="4.3.3.6"/>
    </reaction>
</comment>
<comment type="pathway">
    <text evidence="1">Cofactor biosynthesis; pyridoxal 5'-phosphate biosynthesis.</text>
</comment>
<comment type="subunit">
    <text evidence="1">In the presence of PdxT, forms a dodecamer of heterodimers.</text>
</comment>
<comment type="similarity">
    <text evidence="1">Belongs to the PdxS/SNZ family.</text>
</comment>
<reference key="1">
    <citation type="submission" date="2007-06" db="EMBL/GenBank/DDBJ databases">
        <title>Complete sequence of Methanococcus vannielii SB.</title>
        <authorList>
            <consortium name="US DOE Joint Genome Institute"/>
            <person name="Copeland A."/>
            <person name="Lucas S."/>
            <person name="Lapidus A."/>
            <person name="Barry K."/>
            <person name="Glavina del Rio T."/>
            <person name="Dalin E."/>
            <person name="Tice H."/>
            <person name="Pitluck S."/>
            <person name="Chain P."/>
            <person name="Malfatti S."/>
            <person name="Shin M."/>
            <person name="Vergez L."/>
            <person name="Schmutz J."/>
            <person name="Larimer F."/>
            <person name="Land M."/>
            <person name="Hauser L."/>
            <person name="Kyrpides N."/>
            <person name="Anderson I."/>
            <person name="Sieprawska-Lupa M."/>
            <person name="Whitman W.B."/>
            <person name="Richardson P."/>
        </authorList>
    </citation>
    <scope>NUCLEOTIDE SEQUENCE [LARGE SCALE GENOMIC DNA]</scope>
    <source>
        <strain>ATCC 35089 / DSM 1224 / JCM 13029 / OCM 148 / SB</strain>
    </source>
</reference>